<feature type="chain" id="PRO_0000359124" description="Acetyl-coenzyme A carboxylase carboxyl transferase subunit beta, chloroplastic">
    <location>
        <begin position="1"/>
        <end position="489"/>
    </location>
</feature>
<feature type="domain" description="CoA carboxyltransferase N-terminal" evidence="3">
    <location>
        <begin position="222"/>
        <end position="489"/>
    </location>
</feature>
<feature type="zinc finger region" description="C4-type" evidence="2">
    <location>
        <begin position="226"/>
        <end position="248"/>
    </location>
</feature>
<feature type="binding site" evidence="2">
    <location>
        <position position="226"/>
    </location>
    <ligand>
        <name>Zn(2+)</name>
        <dbReference type="ChEBI" id="CHEBI:29105"/>
    </ligand>
</feature>
<feature type="binding site" evidence="2">
    <location>
        <position position="229"/>
    </location>
    <ligand>
        <name>Zn(2+)</name>
        <dbReference type="ChEBI" id="CHEBI:29105"/>
    </ligand>
</feature>
<feature type="binding site" evidence="2">
    <location>
        <position position="245"/>
    </location>
    <ligand>
        <name>Zn(2+)</name>
        <dbReference type="ChEBI" id="CHEBI:29105"/>
    </ligand>
</feature>
<feature type="binding site" evidence="2">
    <location>
        <position position="248"/>
    </location>
    <ligand>
        <name>Zn(2+)</name>
        <dbReference type="ChEBI" id="CHEBI:29105"/>
    </ligand>
</feature>
<comment type="function">
    <text evidence="2">Component of the acetyl coenzyme A carboxylase (ACC) complex. Biotin carboxylase (BC) catalyzes the carboxylation of biotin on its carrier protein (BCCP) and then the CO(2) group is transferred by the transcarboxylase to acetyl-CoA to form malonyl-CoA.</text>
</comment>
<comment type="catalytic activity">
    <reaction evidence="2">
        <text>N(6)-carboxybiotinyl-L-lysyl-[protein] + acetyl-CoA = N(6)-biotinyl-L-lysyl-[protein] + malonyl-CoA</text>
        <dbReference type="Rhea" id="RHEA:54728"/>
        <dbReference type="Rhea" id="RHEA-COMP:10505"/>
        <dbReference type="Rhea" id="RHEA-COMP:10506"/>
        <dbReference type="ChEBI" id="CHEBI:57288"/>
        <dbReference type="ChEBI" id="CHEBI:57384"/>
        <dbReference type="ChEBI" id="CHEBI:83144"/>
        <dbReference type="ChEBI" id="CHEBI:83145"/>
        <dbReference type="EC" id="2.1.3.15"/>
    </reaction>
</comment>
<comment type="cofactor">
    <cofactor evidence="2">
        <name>Zn(2+)</name>
        <dbReference type="ChEBI" id="CHEBI:29105"/>
    </cofactor>
    <text evidence="2">Binds 1 zinc ion per subunit.</text>
</comment>
<comment type="pathway">
    <text evidence="2">Lipid metabolism; malonyl-CoA biosynthesis; malonyl-CoA from acetyl-CoA: step 1/1.</text>
</comment>
<comment type="subunit">
    <text evidence="1">Acetyl-CoA carboxylase is a heterohexamer composed of biotin carboxyl carrier protein, biotin carboxylase and 2 subunits each of ACCase subunit alpha and ACCase plastid-coded subunit beta (accD).</text>
</comment>
<comment type="subcellular location">
    <subcellularLocation>
        <location evidence="2">Plastid</location>
        <location evidence="2">Chloroplast stroma</location>
    </subcellularLocation>
</comment>
<comment type="similarity">
    <text evidence="2">Belongs to the AccD/PCCB family.</text>
</comment>
<comment type="sequence caution" evidence="4">
    <conflict type="erroneous initiation">
        <sequence resource="EMBL-CDS" id="ABQ45258"/>
    </conflict>
    <text>Extended N-terminus.</text>
</comment>
<proteinExistence type="inferred from homology"/>
<gene>
    <name evidence="2" type="primary">accD</name>
</gene>
<geneLocation type="chloroplast"/>
<evidence type="ECO:0000250" key="1"/>
<evidence type="ECO:0000255" key="2">
    <source>
        <dbReference type="HAMAP-Rule" id="MF_01395"/>
    </source>
</evidence>
<evidence type="ECO:0000255" key="3">
    <source>
        <dbReference type="PROSITE-ProRule" id="PRU01136"/>
    </source>
</evidence>
<evidence type="ECO:0000305" key="4"/>
<name>ACCD_BUXMI</name>
<protein>
    <recommendedName>
        <fullName evidence="2">Acetyl-coenzyme A carboxylase carboxyl transferase subunit beta, chloroplastic</fullName>
        <shortName evidence="2">ACCase subunit beta</shortName>
        <shortName evidence="2">Acetyl-CoA carboxylase carboxyltransferase subunit beta</shortName>
        <ecNumber evidence="2">2.1.3.15</ecNumber>
    </recommendedName>
</protein>
<reference key="1">
    <citation type="journal article" date="2007" name="Mol. Phylogenet. Evol.">
        <title>Phylogenetic and evolutionary implications of complete chloroplast genome sequences of four early-diverging angiosperms: Buxus (Buxaceae), Chloranthus (Chloranthaceae), Dioscorea (Dioscoreaceae), and Illicium (Schisandraceae).</title>
        <authorList>
            <person name="Hansen D.R."/>
            <person name="Dastidar S.G."/>
            <person name="Cai Z."/>
            <person name="Penaflor C."/>
            <person name="Kuehl J.V."/>
            <person name="Boore J.L."/>
            <person name="Jansen R.K."/>
        </authorList>
    </citation>
    <scope>NUCLEOTIDE SEQUENCE [LARGE SCALE GENOMIC DNA]</scope>
</reference>
<keyword id="KW-0067">ATP-binding</keyword>
<keyword id="KW-0150">Chloroplast</keyword>
<keyword id="KW-0275">Fatty acid biosynthesis</keyword>
<keyword id="KW-0276">Fatty acid metabolism</keyword>
<keyword id="KW-0444">Lipid biosynthesis</keyword>
<keyword id="KW-0443">Lipid metabolism</keyword>
<keyword id="KW-0479">Metal-binding</keyword>
<keyword id="KW-0547">Nucleotide-binding</keyword>
<keyword id="KW-0934">Plastid</keyword>
<keyword id="KW-0808">Transferase</keyword>
<keyword id="KW-0862">Zinc</keyword>
<keyword id="KW-0863">Zinc-finger</keyword>
<organism>
    <name type="scientific">Buxus microphylla</name>
    <name type="common">Littleleaf boxwood</name>
    <name type="synonym">Japanese boxwood</name>
    <dbReference type="NCBI Taxonomy" id="153571"/>
    <lineage>
        <taxon>Eukaryota</taxon>
        <taxon>Viridiplantae</taxon>
        <taxon>Streptophyta</taxon>
        <taxon>Embryophyta</taxon>
        <taxon>Tracheophyta</taxon>
        <taxon>Spermatophyta</taxon>
        <taxon>Magnoliopsida</taxon>
        <taxon>Buxales</taxon>
        <taxon>Buxaceae</taxon>
        <taxon>Buxus</taxon>
    </lineage>
</organism>
<accession>A6MM45</accession>
<dbReference type="EC" id="2.1.3.15" evidence="2"/>
<dbReference type="EMBL" id="EF380351">
    <property type="protein sequence ID" value="ABQ45258.1"/>
    <property type="status" value="ALT_INIT"/>
    <property type="molecule type" value="Genomic_DNA"/>
</dbReference>
<dbReference type="RefSeq" id="YP_001294193.1">
    <property type="nucleotide sequence ID" value="NC_009599.1"/>
</dbReference>
<dbReference type="SMR" id="A6MM45"/>
<dbReference type="GeneID" id="5236876"/>
<dbReference type="UniPathway" id="UPA00655">
    <property type="reaction ID" value="UER00711"/>
</dbReference>
<dbReference type="GO" id="GO:0009317">
    <property type="term" value="C:acetyl-CoA carboxylase complex"/>
    <property type="evidence" value="ECO:0007669"/>
    <property type="project" value="InterPro"/>
</dbReference>
<dbReference type="GO" id="GO:0009570">
    <property type="term" value="C:chloroplast stroma"/>
    <property type="evidence" value="ECO:0007669"/>
    <property type="project" value="UniProtKB-SubCell"/>
</dbReference>
<dbReference type="GO" id="GO:0003989">
    <property type="term" value="F:acetyl-CoA carboxylase activity"/>
    <property type="evidence" value="ECO:0007669"/>
    <property type="project" value="InterPro"/>
</dbReference>
<dbReference type="GO" id="GO:0005524">
    <property type="term" value="F:ATP binding"/>
    <property type="evidence" value="ECO:0007669"/>
    <property type="project" value="UniProtKB-KW"/>
</dbReference>
<dbReference type="GO" id="GO:0016743">
    <property type="term" value="F:carboxyl- or carbamoyltransferase activity"/>
    <property type="evidence" value="ECO:0007669"/>
    <property type="project" value="UniProtKB-UniRule"/>
</dbReference>
<dbReference type="GO" id="GO:0008270">
    <property type="term" value="F:zinc ion binding"/>
    <property type="evidence" value="ECO:0007669"/>
    <property type="project" value="UniProtKB-UniRule"/>
</dbReference>
<dbReference type="GO" id="GO:0006633">
    <property type="term" value="P:fatty acid biosynthetic process"/>
    <property type="evidence" value="ECO:0007669"/>
    <property type="project" value="UniProtKB-KW"/>
</dbReference>
<dbReference type="GO" id="GO:2001295">
    <property type="term" value="P:malonyl-CoA biosynthetic process"/>
    <property type="evidence" value="ECO:0007669"/>
    <property type="project" value="UniProtKB-UniRule"/>
</dbReference>
<dbReference type="Gene3D" id="3.90.226.10">
    <property type="entry name" value="2-enoyl-CoA Hydratase, Chain A, domain 1"/>
    <property type="match status" value="1"/>
</dbReference>
<dbReference type="HAMAP" id="MF_01395">
    <property type="entry name" value="AcetylCoA_CT_beta"/>
    <property type="match status" value="1"/>
</dbReference>
<dbReference type="InterPro" id="IPR034733">
    <property type="entry name" value="AcCoA_carboxyl_beta"/>
</dbReference>
<dbReference type="InterPro" id="IPR000438">
    <property type="entry name" value="Acetyl_CoA_COase_Trfase_b_su"/>
</dbReference>
<dbReference type="InterPro" id="IPR029045">
    <property type="entry name" value="ClpP/crotonase-like_dom_sf"/>
</dbReference>
<dbReference type="InterPro" id="IPR011762">
    <property type="entry name" value="COA_CT_N"/>
</dbReference>
<dbReference type="NCBIfam" id="TIGR00515">
    <property type="entry name" value="accD"/>
    <property type="match status" value="1"/>
</dbReference>
<dbReference type="PANTHER" id="PTHR42995">
    <property type="entry name" value="ACETYL-COENZYME A CARBOXYLASE CARBOXYL TRANSFERASE SUBUNIT BETA, CHLOROPLASTIC"/>
    <property type="match status" value="1"/>
</dbReference>
<dbReference type="PANTHER" id="PTHR42995:SF5">
    <property type="entry name" value="ACETYL-COENZYME A CARBOXYLASE CARBOXYL TRANSFERASE SUBUNIT BETA, CHLOROPLASTIC"/>
    <property type="match status" value="1"/>
</dbReference>
<dbReference type="Pfam" id="PF01039">
    <property type="entry name" value="Carboxyl_trans"/>
    <property type="match status" value="1"/>
</dbReference>
<dbReference type="PRINTS" id="PR01070">
    <property type="entry name" value="ACCCTRFRASEB"/>
</dbReference>
<dbReference type="SUPFAM" id="SSF52096">
    <property type="entry name" value="ClpP/crotonase"/>
    <property type="match status" value="1"/>
</dbReference>
<dbReference type="PROSITE" id="PS50980">
    <property type="entry name" value="COA_CT_NTER"/>
    <property type="match status" value="1"/>
</dbReference>
<sequence>MEKWWFNSMLSNEELEHACGLSKSMESLGPIGNTSGGEDHIINNMDKNIHSWGDSGSSSCSNVYPLFGVRGIQGFISDDTFLVRDSNGDSYSIYFDIENKIFEIDNDHSFLSELESSFSSYQNNGSNSDNPYYDRYIYDTKYSWNNYINSCIDSYLRSEIRIDSYILSGSDNYSDSYIYSYICSECVNSSESSSIKTSTNGSDLNIRGRYNDLDLNKKYRHLWVQCENCYGLNYKKFFRSKMNICEQCGYHLKMSSSDRIELSIDTGTWDPMDEDMVSMDPIEFHSEEELYKDRINSYQRKTGLTEAVQTGIGQLNGIPIAIGVMDFQFMGGSMGSVVGEKITRLIEYATNRSLPVIIVCASGGARMQEGSLSLMQMAKISSASYNYQSNKKLFYVSILTSPTTGGVTASFGMLGDIIIAEPNAYIAFAGKRVIEQTLNKTVPDGSQTAEYLFHKGLFDPIVPRNLLKGVLSELFQLHGFFPLNSNSIK</sequence>